<sequence length="143" mass="16083">MVAVVLVGHGSRLPYSRQVVEKIAEYVEEMGDFETVEVGFMELCEPTVQEAVKKAAESGVDKIVVVPVFLAHGVHTKRDIPKMLGLEPEWDDDEDDHDHHHHHHRDYTPVDVDAEIVYAEPLGADPRIAEIVIDRIKEALGEE</sequence>
<reference key="1">
    <citation type="journal article" date="2002" name="Proc. Natl. Acad. Sci. U.S.A.">
        <title>The complete genome of hyperthermophile Methanopyrus kandleri AV19 and monophyly of archaeal methanogens.</title>
        <authorList>
            <person name="Slesarev A.I."/>
            <person name="Mezhevaya K.V."/>
            <person name="Makarova K.S."/>
            <person name="Polushin N.N."/>
            <person name="Shcherbinina O.V."/>
            <person name="Shakhova V.V."/>
            <person name="Belova G.I."/>
            <person name="Aravind L."/>
            <person name="Natale D.A."/>
            <person name="Rogozin I.B."/>
            <person name="Tatusov R.L."/>
            <person name="Wolf Y.I."/>
            <person name="Stetter K.O."/>
            <person name="Malykh A.G."/>
            <person name="Koonin E.V."/>
            <person name="Kozyavkin S.A."/>
        </authorList>
    </citation>
    <scope>NUCLEOTIDE SEQUENCE [LARGE SCALE GENOMIC DNA]</scope>
    <source>
        <strain>AV19 / DSM 6324 / JCM 9639 / NBRC 100938</strain>
    </source>
</reference>
<evidence type="ECO:0000255" key="1">
    <source>
        <dbReference type="HAMAP-Rule" id="MF_00785"/>
    </source>
</evidence>
<keyword id="KW-0169">Cobalamin biosynthesis</keyword>
<keyword id="KW-0170">Cobalt</keyword>
<keyword id="KW-0456">Lyase</keyword>
<keyword id="KW-0479">Metal-binding</keyword>
<keyword id="KW-0484">Methanogenesis</keyword>
<keyword id="KW-0533">Nickel</keyword>
<keyword id="KW-1185">Reference proteome</keyword>
<accession>Q8TY77</accession>
<protein>
    <recommendedName>
        <fullName evidence="1">Sirohydrochlorin cobaltochelatase</fullName>
        <ecNumber evidence="1">4.99.1.3</ecNumber>
    </recommendedName>
    <alternativeName>
        <fullName evidence="1">CbiXS</fullName>
    </alternativeName>
    <alternativeName>
        <fullName evidence="1">Sirohydrochlorin nickelchelatase</fullName>
        <ecNumber evidence="1">4.99.1.11</ecNumber>
    </alternativeName>
</protein>
<organism>
    <name type="scientific">Methanopyrus kandleri (strain AV19 / DSM 6324 / JCM 9639 / NBRC 100938)</name>
    <dbReference type="NCBI Taxonomy" id="190192"/>
    <lineage>
        <taxon>Archaea</taxon>
        <taxon>Methanobacteriati</taxon>
        <taxon>Methanobacteriota</taxon>
        <taxon>Methanomada group</taxon>
        <taxon>Methanopyri</taxon>
        <taxon>Methanopyrales</taxon>
        <taxon>Methanopyraceae</taxon>
        <taxon>Methanopyrus</taxon>
    </lineage>
</organism>
<comment type="function">
    <text evidence="1">Catalyzes the insertion of Co(2+) into sirohydrochlorin as part of the anaerobic pathway to cobalamin biosynthesis. Involved in the biosynthesis of the unique nickel-containing tetrapyrrole coenzyme F430, the prosthetic group of methyl-coenzyme M reductase (MCR), which plays a key role in methanogenesis and anaerobic methane oxidation. Catalyzes the insertion of Ni(2+) into sirohydrochlorin to yield Ni-sirohydrochlorin.</text>
</comment>
<comment type="catalytic activity">
    <reaction evidence="1">
        <text>Co-sirohydrochlorin + 2 H(+) = sirohydrochlorin + Co(2+)</text>
        <dbReference type="Rhea" id="RHEA:15893"/>
        <dbReference type="ChEBI" id="CHEBI:15378"/>
        <dbReference type="ChEBI" id="CHEBI:48828"/>
        <dbReference type="ChEBI" id="CHEBI:58351"/>
        <dbReference type="ChEBI" id="CHEBI:60049"/>
        <dbReference type="EC" id="4.99.1.3"/>
    </reaction>
</comment>
<comment type="catalytic activity">
    <reaction evidence="1">
        <text>Ni-sirohydrochlorin + 2 H(+) = sirohydrochlorin + Ni(2+)</text>
        <dbReference type="Rhea" id="RHEA:52796"/>
        <dbReference type="ChEBI" id="CHEBI:15378"/>
        <dbReference type="ChEBI" id="CHEBI:49786"/>
        <dbReference type="ChEBI" id="CHEBI:58351"/>
        <dbReference type="ChEBI" id="CHEBI:136841"/>
        <dbReference type="EC" id="4.99.1.11"/>
    </reaction>
</comment>
<comment type="pathway">
    <text evidence="1">Cofactor biosynthesis; adenosylcobalamin biosynthesis; cob(II)yrinate a,c-diamide from sirohydrochlorin (anaerobic route): step 1/10.</text>
</comment>
<comment type="subunit">
    <text evidence="1">Homotetramer; dimer of dimers.</text>
</comment>
<comment type="similarity">
    <text evidence="1">Belongs to the CbiX family. CbiXS subfamily.</text>
</comment>
<gene>
    <name evidence="1" type="primary">cbiX</name>
    <name evidence="1" type="synonym">cfbA</name>
    <name type="ordered locus">MK0428</name>
</gene>
<name>CFBA_METKA</name>
<dbReference type="EC" id="4.99.1.3" evidence="1"/>
<dbReference type="EC" id="4.99.1.11" evidence="1"/>
<dbReference type="EMBL" id="AE009439">
    <property type="protein sequence ID" value="AAM01643.1"/>
    <property type="molecule type" value="Genomic_DNA"/>
</dbReference>
<dbReference type="RefSeq" id="WP_011018798.1">
    <property type="nucleotide sequence ID" value="NC_003551.1"/>
</dbReference>
<dbReference type="SMR" id="Q8TY77"/>
<dbReference type="FunCoup" id="Q8TY77">
    <property type="interactions" value="84"/>
</dbReference>
<dbReference type="STRING" id="190192.MK0428"/>
<dbReference type="PaxDb" id="190192-MK0428"/>
<dbReference type="EnsemblBacteria" id="AAM01643">
    <property type="protein sequence ID" value="AAM01643"/>
    <property type="gene ID" value="MK0428"/>
</dbReference>
<dbReference type="GeneID" id="1477731"/>
<dbReference type="KEGG" id="mka:MK0428"/>
<dbReference type="PATRIC" id="fig|190192.8.peg.457"/>
<dbReference type="HOGENOM" id="CLU_065901_2_1_2"/>
<dbReference type="InParanoid" id="Q8TY77"/>
<dbReference type="OrthoDB" id="11653at2157"/>
<dbReference type="UniPathway" id="UPA00148">
    <property type="reaction ID" value="UER00223"/>
</dbReference>
<dbReference type="Proteomes" id="UP000001826">
    <property type="component" value="Chromosome"/>
</dbReference>
<dbReference type="GO" id="GO:0050897">
    <property type="term" value="F:cobalt ion binding"/>
    <property type="evidence" value="ECO:0007669"/>
    <property type="project" value="UniProtKB-UniRule"/>
</dbReference>
<dbReference type="GO" id="GO:0016151">
    <property type="term" value="F:nickel cation binding"/>
    <property type="evidence" value="ECO:0007669"/>
    <property type="project" value="UniProtKB-UniRule"/>
</dbReference>
<dbReference type="GO" id="GO:0016852">
    <property type="term" value="F:sirohydrochlorin cobaltochelatase activity"/>
    <property type="evidence" value="ECO:0007669"/>
    <property type="project" value="UniProtKB-UniRule"/>
</dbReference>
<dbReference type="GO" id="GO:0019251">
    <property type="term" value="P:anaerobic cobalamin biosynthetic process"/>
    <property type="evidence" value="ECO:0007669"/>
    <property type="project" value="UniProtKB-UniRule"/>
</dbReference>
<dbReference type="GO" id="GO:0015948">
    <property type="term" value="P:methanogenesis"/>
    <property type="evidence" value="ECO:0007669"/>
    <property type="project" value="UniProtKB-KW"/>
</dbReference>
<dbReference type="CDD" id="cd03416">
    <property type="entry name" value="CbiX_SirB_N"/>
    <property type="match status" value="1"/>
</dbReference>
<dbReference type="Gene3D" id="3.40.50.1400">
    <property type="match status" value="1"/>
</dbReference>
<dbReference type="HAMAP" id="MF_00785">
    <property type="entry name" value="CbiX"/>
    <property type="match status" value="1"/>
</dbReference>
<dbReference type="InterPro" id="IPR002762">
    <property type="entry name" value="CbiX-like"/>
</dbReference>
<dbReference type="InterPro" id="IPR023652">
    <property type="entry name" value="SiroHydchlorin_Cochelatase"/>
</dbReference>
<dbReference type="InterPro" id="IPR050963">
    <property type="entry name" value="Sirohydro_Cobaltochel/CbiX"/>
</dbReference>
<dbReference type="NCBIfam" id="NF033198">
    <property type="entry name" value="F430_CfbA"/>
    <property type="match status" value="1"/>
</dbReference>
<dbReference type="NCBIfam" id="NF002090">
    <property type="entry name" value="PRK00923.1"/>
    <property type="match status" value="1"/>
</dbReference>
<dbReference type="PANTHER" id="PTHR33542">
    <property type="entry name" value="SIROHYDROCHLORIN FERROCHELATASE, CHLOROPLASTIC"/>
    <property type="match status" value="1"/>
</dbReference>
<dbReference type="PANTHER" id="PTHR33542:SF3">
    <property type="entry name" value="SIROHYDROCHLORIN FERROCHELATASE, CHLOROPLASTIC"/>
    <property type="match status" value="1"/>
</dbReference>
<dbReference type="Pfam" id="PF01903">
    <property type="entry name" value="CbiX"/>
    <property type="match status" value="1"/>
</dbReference>
<dbReference type="SUPFAM" id="SSF53800">
    <property type="entry name" value="Chelatase"/>
    <property type="match status" value="1"/>
</dbReference>
<proteinExistence type="inferred from homology"/>
<feature type="chain" id="PRO_0000150357" description="Sirohydrochlorin cobaltochelatase">
    <location>
        <begin position="1"/>
        <end position="143"/>
    </location>
</feature>
<feature type="active site" description="Proton acceptor" evidence="1">
    <location>
        <position position="9"/>
    </location>
</feature>
<feature type="binding site" evidence="1">
    <location>
        <position position="9"/>
    </location>
    <ligand>
        <name>Co(2+)</name>
        <dbReference type="ChEBI" id="CHEBI:48828"/>
    </ligand>
</feature>
<feature type="binding site" evidence="1">
    <location>
        <position position="9"/>
    </location>
    <ligand>
        <name>Ni(2+)</name>
        <dbReference type="ChEBI" id="CHEBI:49786"/>
    </ligand>
</feature>
<feature type="binding site" evidence="1">
    <location>
        <position position="45"/>
    </location>
    <ligand>
        <name>substrate</name>
    </ligand>
</feature>
<feature type="binding site" evidence="1">
    <location>
        <begin position="70"/>
        <end position="75"/>
    </location>
    <ligand>
        <name>substrate</name>
    </ligand>
</feature>
<feature type="binding site" evidence="1">
    <location>
        <position position="75"/>
    </location>
    <ligand>
        <name>Co(2+)</name>
        <dbReference type="ChEBI" id="CHEBI:48828"/>
    </ligand>
</feature>
<feature type="binding site" evidence="1">
    <location>
        <position position="75"/>
    </location>
    <ligand>
        <name>Ni(2+)</name>
        <dbReference type="ChEBI" id="CHEBI:49786"/>
    </ligand>
</feature>